<keyword id="KW-0050">Antiport</keyword>
<keyword id="KW-0256">Endoplasmic reticulum</keyword>
<keyword id="KW-0333">Golgi apparatus</keyword>
<keyword id="KW-0472">Membrane</keyword>
<keyword id="KW-1185">Reference proteome</keyword>
<keyword id="KW-0762">Sugar transport</keyword>
<keyword id="KW-0812">Transmembrane</keyword>
<keyword id="KW-1133">Transmembrane helix</keyword>
<keyword id="KW-0813">Transport</keyword>
<proteinExistence type="evidence at protein level"/>
<organism>
    <name type="scientific">Arabidopsis thaliana</name>
    <name type="common">Mouse-ear cress</name>
    <dbReference type="NCBI Taxonomy" id="3702"/>
    <lineage>
        <taxon>Eukaryota</taxon>
        <taxon>Viridiplantae</taxon>
        <taxon>Streptophyta</taxon>
        <taxon>Embryophyta</taxon>
        <taxon>Tracheophyta</taxon>
        <taxon>Spermatophyta</taxon>
        <taxon>Magnoliopsida</taxon>
        <taxon>eudicotyledons</taxon>
        <taxon>Gunneridae</taxon>
        <taxon>Pentapetalae</taxon>
        <taxon>rosids</taxon>
        <taxon>malvids</taxon>
        <taxon>Brassicales</taxon>
        <taxon>Brassicaceae</taxon>
        <taxon>Camelineae</taxon>
        <taxon>Arabidopsis</taxon>
    </lineage>
</organism>
<reference key="1">
    <citation type="journal article" date="2015" name="Plant Cell">
        <title>Identification and characterization of a Golgi-localized UDP-xylose transporter family from Arabidopsis.</title>
        <authorList>
            <person name="Ebert B."/>
            <person name="Rautengarten C."/>
            <person name="Guo X."/>
            <person name="Xiong G."/>
            <person name="Stonebloom S."/>
            <person name="Smith-Moritz A.M."/>
            <person name="Herter T."/>
            <person name="Chan L.J."/>
            <person name="Adams P.D."/>
            <person name="Petzold C.J."/>
            <person name="Pauly M."/>
            <person name="Willats W.G."/>
            <person name="Heazlewood J.L."/>
            <person name="Scheller H.V."/>
        </authorList>
    </citation>
    <scope>NUCLEOTIDE SEQUENCE [MRNA]</scope>
    <scope>GENE FAMILY</scope>
    <scope>NOMENCLATURE</scope>
    <scope>TISSUE SPECIFICITY</scope>
    <scope>SUBCELLULAR LOCATION</scope>
    <scope>FUNCTION</scope>
    <scope>BIOPHYSICOCHEMICAL PROPERTIES</scope>
    <scope>DISRUPTION PHENOTYPE</scope>
    <source>
        <strain>cv. Columbia</strain>
    </source>
</reference>
<reference key="2">
    <citation type="journal article" date="1999" name="Nature">
        <title>Sequence and analysis of chromosome 2 of the plant Arabidopsis thaliana.</title>
        <authorList>
            <person name="Lin X."/>
            <person name="Kaul S."/>
            <person name="Rounsley S.D."/>
            <person name="Shea T.P."/>
            <person name="Benito M.-I."/>
            <person name="Town C.D."/>
            <person name="Fujii C.Y."/>
            <person name="Mason T.M."/>
            <person name="Bowman C.L."/>
            <person name="Barnstead M.E."/>
            <person name="Feldblyum T.V."/>
            <person name="Buell C.R."/>
            <person name="Ketchum K.A."/>
            <person name="Lee J.J."/>
            <person name="Ronning C.M."/>
            <person name="Koo H.L."/>
            <person name="Moffat K.S."/>
            <person name="Cronin L.A."/>
            <person name="Shen M."/>
            <person name="Pai G."/>
            <person name="Van Aken S."/>
            <person name="Umayam L."/>
            <person name="Tallon L.J."/>
            <person name="Gill J.E."/>
            <person name="Adams M.D."/>
            <person name="Carrera A.J."/>
            <person name="Creasy T.H."/>
            <person name="Goodman H.M."/>
            <person name="Somerville C.R."/>
            <person name="Copenhaver G.P."/>
            <person name="Preuss D."/>
            <person name="Nierman W.C."/>
            <person name="White O."/>
            <person name="Eisen J.A."/>
            <person name="Salzberg S.L."/>
            <person name="Fraser C.M."/>
            <person name="Venter J.C."/>
        </authorList>
    </citation>
    <scope>NUCLEOTIDE SEQUENCE [LARGE SCALE GENOMIC DNA]</scope>
    <source>
        <strain>cv. Columbia</strain>
    </source>
</reference>
<reference key="3">
    <citation type="journal article" date="2017" name="Plant J.">
        <title>Araport11: a complete reannotation of the Arabidopsis thaliana reference genome.</title>
        <authorList>
            <person name="Cheng C.Y."/>
            <person name="Krishnakumar V."/>
            <person name="Chan A.P."/>
            <person name="Thibaud-Nissen F."/>
            <person name="Schobel S."/>
            <person name="Town C.D."/>
        </authorList>
    </citation>
    <scope>GENOME REANNOTATION</scope>
    <source>
        <strain>cv. Columbia</strain>
    </source>
</reference>
<reference key="4">
    <citation type="submission" date="2008-06" db="EMBL/GenBank/DDBJ databases">
        <title>Arabidopsis ORF clones.</title>
        <authorList>
            <person name="de los Reyes C."/>
            <person name="Quan R."/>
            <person name="Chen H."/>
            <person name="Bautista V."/>
            <person name="Kim C.J."/>
            <person name="Ecker J.R."/>
        </authorList>
    </citation>
    <scope>NUCLEOTIDE SEQUENCE [LARGE SCALE MRNA] OF 103-342</scope>
    <source>
        <strain>cv. Columbia</strain>
    </source>
</reference>
<reference key="5">
    <citation type="journal article" date="2014" name="Proc. Natl. Acad. Sci. U.S.A.">
        <title>The Golgi localized bifunctional UDP-rhamnose/UDP-galactose transporter family of Arabidopsis.</title>
        <authorList>
            <person name="Rautengarten C."/>
            <person name="Ebert B."/>
            <person name="Moreno I."/>
            <person name="Temple H."/>
            <person name="Herter T."/>
            <person name="Link B."/>
            <person name="Donas-Cofre D."/>
            <person name="Moreno A."/>
            <person name="Saez-Aguayo S."/>
            <person name="Blanco F."/>
            <person name="Mortimer J.C."/>
            <person name="Schultink A."/>
            <person name="Reiter W.D."/>
            <person name="Dupree P."/>
            <person name="Pauly M."/>
            <person name="Heazlewood J.L."/>
            <person name="Scheller H.V."/>
            <person name="Orellana A."/>
        </authorList>
    </citation>
    <scope>GENE FAMILY</scope>
</reference>
<protein>
    <recommendedName>
        <fullName evidence="7">UDP-xylose transporter 1</fullName>
    </recommendedName>
</protein>
<dbReference type="EMBL" id="KP872766">
    <property type="protein sequence ID" value="AKA88212.1"/>
    <property type="molecule type" value="mRNA"/>
</dbReference>
<dbReference type="EMBL" id="AC006283">
    <property type="status" value="NOT_ANNOTATED_CDS"/>
    <property type="molecule type" value="Genomic_DNA"/>
</dbReference>
<dbReference type="EMBL" id="CP002685">
    <property type="protein sequence ID" value="AEC08106.1"/>
    <property type="molecule type" value="Genomic_DNA"/>
</dbReference>
<dbReference type="EMBL" id="BT033099">
    <property type="protein sequence ID" value="ACF09415.1"/>
    <property type="molecule type" value="mRNA"/>
</dbReference>
<dbReference type="RefSeq" id="NP_850120.3">
    <property type="nucleotide sequence ID" value="NM_179789.4"/>
</dbReference>
<dbReference type="SMR" id="F4IHS9"/>
<dbReference type="FunCoup" id="F4IHS9">
    <property type="interactions" value="2118"/>
</dbReference>
<dbReference type="IntAct" id="F4IHS9">
    <property type="interactions" value="70"/>
</dbReference>
<dbReference type="STRING" id="3702.F4IHS9"/>
<dbReference type="PaxDb" id="3702-AT2G28315.1"/>
<dbReference type="ProteomicsDB" id="243245"/>
<dbReference type="EnsemblPlants" id="AT2G28315.1">
    <property type="protein sequence ID" value="AT2G28315.1"/>
    <property type="gene ID" value="AT2G28315"/>
</dbReference>
<dbReference type="GeneID" id="817378"/>
<dbReference type="Gramene" id="AT2G28315.1">
    <property type="protein sequence ID" value="AT2G28315.1"/>
    <property type="gene ID" value="AT2G28315"/>
</dbReference>
<dbReference type="KEGG" id="ath:AT2G28315"/>
<dbReference type="Araport" id="AT2G28315"/>
<dbReference type="TAIR" id="AT2G28315">
    <property type="gene designation" value="UXT1"/>
</dbReference>
<dbReference type="eggNOG" id="KOG1441">
    <property type="taxonomic scope" value="Eukaryota"/>
</dbReference>
<dbReference type="HOGENOM" id="CLU_048347_0_1_1"/>
<dbReference type="InParanoid" id="F4IHS9"/>
<dbReference type="OrthoDB" id="5547497at2759"/>
<dbReference type="PhylomeDB" id="F4IHS9"/>
<dbReference type="PRO" id="PR:F4IHS9"/>
<dbReference type="Proteomes" id="UP000006548">
    <property type="component" value="Chromosome 2"/>
</dbReference>
<dbReference type="ExpressionAtlas" id="F4IHS9">
    <property type="expression patterns" value="baseline and differential"/>
</dbReference>
<dbReference type="GO" id="GO:0005783">
    <property type="term" value="C:endoplasmic reticulum"/>
    <property type="evidence" value="ECO:0000314"/>
    <property type="project" value="TAIR"/>
</dbReference>
<dbReference type="GO" id="GO:0005789">
    <property type="term" value="C:endoplasmic reticulum membrane"/>
    <property type="evidence" value="ECO:0007669"/>
    <property type="project" value="UniProtKB-SubCell"/>
</dbReference>
<dbReference type="GO" id="GO:0005794">
    <property type="term" value="C:Golgi apparatus"/>
    <property type="evidence" value="ECO:0000314"/>
    <property type="project" value="TAIR"/>
</dbReference>
<dbReference type="GO" id="GO:0000139">
    <property type="term" value="C:Golgi membrane"/>
    <property type="evidence" value="ECO:0007669"/>
    <property type="project" value="UniProtKB-SubCell"/>
</dbReference>
<dbReference type="GO" id="GO:0015297">
    <property type="term" value="F:antiporter activity"/>
    <property type="evidence" value="ECO:0000314"/>
    <property type="project" value="UniProtKB"/>
</dbReference>
<dbReference type="GO" id="GO:0005464">
    <property type="term" value="F:UDP-xylose transmembrane transporter activity"/>
    <property type="evidence" value="ECO:0000314"/>
    <property type="project" value="TAIR"/>
</dbReference>
<dbReference type="GO" id="GO:0009834">
    <property type="term" value="P:plant-type secondary cell wall biogenesis"/>
    <property type="evidence" value="ECO:0000316"/>
    <property type="project" value="TAIR"/>
</dbReference>
<dbReference type="GO" id="GO:1900030">
    <property type="term" value="P:regulation of pectin biosynthetic process"/>
    <property type="evidence" value="ECO:0000316"/>
    <property type="project" value="TAIR"/>
</dbReference>
<dbReference type="GO" id="GO:0015790">
    <property type="term" value="P:UDP-xylose transmembrane transport"/>
    <property type="evidence" value="ECO:0000314"/>
    <property type="project" value="TAIR"/>
</dbReference>
<dbReference type="InterPro" id="IPR004853">
    <property type="entry name" value="Sugar_P_trans_dom"/>
</dbReference>
<dbReference type="InterPro" id="IPR050186">
    <property type="entry name" value="TPT_transporter"/>
</dbReference>
<dbReference type="PANTHER" id="PTHR11132">
    <property type="entry name" value="SOLUTE CARRIER FAMILY 35"/>
    <property type="match status" value="1"/>
</dbReference>
<dbReference type="Pfam" id="PF03151">
    <property type="entry name" value="TPT"/>
    <property type="match status" value="1"/>
</dbReference>
<dbReference type="SUPFAM" id="SSF103481">
    <property type="entry name" value="Multidrug resistance efflux transporter EmrE"/>
    <property type="match status" value="1"/>
</dbReference>
<feature type="chain" id="PRO_0000439525" description="UDP-xylose transporter 1">
    <location>
        <begin position="1"/>
        <end position="342"/>
    </location>
</feature>
<feature type="transmembrane region" description="Helical" evidence="1">
    <location>
        <begin position="7"/>
        <end position="27"/>
    </location>
</feature>
<feature type="transmembrane region" description="Helical" evidence="1">
    <location>
        <begin position="36"/>
        <end position="56"/>
    </location>
</feature>
<feature type="transmembrane region" description="Helical" evidence="1">
    <location>
        <begin position="75"/>
        <end position="95"/>
    </location>
</feature>
<feature type="transmembrane region" description="Helical" evidence="1">
    <location>
        <begin position="100"/>
        <end position="120"/>
    </location>
</feature>
<feature type="transmembrane region" description="Helical" evidence="1">
    <location>
        <begin position="132"/>
        <end position="152"/>
    </location>
</feature>
<feature type="transmembrane region" description="Helical" evidence="1">
    <location>
        <begin position="154"/>
        <end position="174"/>
    </location>
</feature>
<feature type="transmembrane region" description="Helical" evidence="1">
    <location>
        <begin position="184"/>
        <end position="204"/>
    </location>
</feature>
<feature type="transmembrane region" description="Helical" evidence="1">
    <location>
        <begin position="221"/>
        <end position="241"/>
    </location>
</feature>
<feature type="transmembrane region" description="Helical" evidence="1">
    <location>
        <begin position="250"/>
        <end position="270"/>
    </location>
</feature>
<feature type="transmembrane region" description="Helical" evidence="1">
    <location>
        <begin position="280"/>
        <end position="300"/>
    </location>
</feature>
<feature type="region of interest" description="Disordered" evidence="2">
    <location>
        <begin position="305"/>
        <end position="342"/>
    </location>
</feature>
<feature type="compositionally biased region" description="Basic and acidic residues" evidence="2">
    <location>
        <begin position="327"/>
        <end position="342"/>
    </location>
</feature>
<accession>F4IHS9</accession>
<accession>B3LFB1</accession>
<comment type="function">
    <text evidence="3">Nucleotide-sugar transporter that transports UDP-xylose and UMP in a strict counter-exchange mode.</text>
</comment>
<comment type="biophysicochemical properties">
    <kinetics>
        <KM evidence="3">39 uM for UDP-Xylose</KM>
        <Vmax evidence="3">16.0 nmol/sec/mg enzyme toward UDP-Xylose</Vmax>
    </kinetics>
</comment>
<comment type="subcellular location">
    <subcellularLocation>
        <location evidence="3">Golgi apparatus membrane</location>
        <topology evidence="1">Multi-pass membrane protein</topology>
    </subcellularLocation>
    <subcellularLocation>
        <location evidence="3">Endoplasmic reticulum membrane</location>
        <topology evidence="1">Multi-pass membrane protein</topology>
    </subcellularLocation>
</comment>
<comment type="tissue specificity">
    <text evidence="3">Ubiquitous.</text>
</comment>
<comment type="disruption phenotype">
    <text evidence="3">No visible phenotype. Slight reduction of xylose content in the cell wall composition.</text>
</comment>
<comment type="similarity">
    <text evidence="4">Belongs to the TPT transporter family. TPT (TC 2.A.7.9) subfamily.</text>
</comment>
<gene>
    <name evidence="7" type="primary">UXT1</name>
    <name evidence="5" type="ordered locus">At2g28315</name>
    <name evidence="6" type="ORF">T1B3.18</name>
</gene>
<evidence type="ECO:0000255" key="1"/>
<evidence type="ECO:0000256" key="2">
    <source>
        <dbReference type="SAM" id="MobiDB-lite"/>
    </source>
</evidence>
<evidence type="ECO:0000269" key="3">
    <source>
    </source>
</evidence>
<evidence type="ECO:0000305" key="4"/>
<evidence type="ECO:0000312" key="5">
    <source>
        <dbReference type="Araport" id="AT2G28315"/>
    </source>
</evidence>
<evidence type="ECO:0000312" key="6">
    <source>
        <dbReference type="EMBL" id="AC006283"/>
    </source>
</evidence>
<evidence type="ECO:0000312" key="7">
    <source>
        <dbReference type="EMBL" id="AKA88212.1"/>
    </source>
</evidence>
<name>UXT1_ARATH</name>
<sequence>MGEMKSMQMGVIGALFLSVASSVSIVICNKALMTNLGFPFATTLTSWHLMVTYCTLHVAYKLNFFENKPIDMRTVVLFGLLNGISIGLLNLSLGFNSIGFYQMTKLAIIPFTVLLETLFLNKKFSQKIKFSLFLLLVGVGIASITDLQLNFVGSVLSLLAIATTCVGQILTNTIQKRLNVTSTQLLYQSAPFQAAILFVSGPFVDKYLTSLNVFSFHYSPIVVGFITLSCLIAVSVNFSTFLVIGKTSPVTYQVLGHLKTCLVLAFGYTLLHDPFTPRNIAGILIAVLGMLLYSYFCSVASKSKQASSDSTFLGKDRDTTPLLGQENENHHEAKKLDKHSPV</sequence>